<sequence>MREIVHLQAGQCGNQIGAKFWEVISDEHGIDPTGTYHGDSDLQLERINVYYNEATGGNYVPRAVLVDLEPGTMDSVRSGPFGQIFRPDNFVFGQSGAGNNWAKGHYTEGAELVDAVLDVVRKEAESCDCLQGFQLTHSLGGGTGSGMGTLLISKIREEFPDRIMNTFSVVPSPKVSDTVVEPYNATLSVHQLVENTDETYCIDNEALYDICFRTLKLTTPTYGDLNHLVSATMSGVTTCLRFPGQLNADLRKLAVNMVPFPRLHFFMPGFAPLTSRGSQQYRALTVPELTQQMFDAKNMMAACDPRHGRYLTVAAVFRGRMSMKEVDEQMLSVQSKNSSYFVEWIPNNVKTAVCDIPPRGLKMAATFIGNSTAIQELFKRISEQFTAMFRRKAFLHWYTGEGMDEMEFTEAESNMNDLVSEYQQYQDATAEEGEFEEEAEEEVA</sequence>
<keyword id="KW-0970">Cilium biogenesis/degradation</keyword>
<keyword id="KW-0963">Cytoplasm</keyword>
<keyword id="KW-0206">Cytoskeleton</keyword>
<keyword id="KW-0903">Direct protein sequencing</keyword>
<keyword id="KW-0342">GTP-binding</keyword>
<keyword id="KW-1017">Isopeptide bond</keyword>
<keyword id="KW-0460">Magnesium</keyword>
<keyword id="KW-0479">Metal-binding</keyword>
<keyword id="KW-0493">Microtubule</keyword>
<keyword id="KW-0547">Nucleotide-binding</keyword>
<keyword id="KW-0597">Phosphoprotein</keyword>
<keyword id="KW-1185">Reference proteome</keyword>
<gene>
    <name type="primary">Tubb4a</name>
    <name type="synonym">Tubb4</name>
</gene>
<accession>Q9D6F9</accession>
<accession>Q62364</accession>
<accession>Q80Y54</accession>
<reference key="1">
    <citation type="journal article" date="2005" name="Science">
        <title>The transcriptional landscape of the mammalian genome.</title>
        <authorList>
            <person name="Carninci P."/>
            <person name="Kasukawa T."/>
            <person name="Katayama S."/>
            <person name="Gough J."/>
            <person name="Frith M.C."/>
            <person name="Maeda N."/>
            <person name="Oyama R."/>
            <person name="Ravasi T."/>
            <person name="Lenhard B."/>
            <person name="Wells C."/>
            <person name="Kodzius R."/>
            <person name="Shimokawa K."/>
            <person name="Bajic V.B."/>
            <person name="Brenner S.E."/>
            <person name="Batalov S."/>
            <person name="Forrest A.R."/>
            <person name="Zavolan M."/>
            <person name="Davis M.J."/>
            <person name="Wilming L.G."/>
            <person name="Aidinis V."/>
            <person name="Allen J.E."/>
            <person name="Ambesi-Impiombato A."/>
            <person name="Apweiler R."/>
            <person name="Aturaliya R.N."/>
            <person name="Bailey T.L."/>
            <person name="Bansal M."/>
            <person name="Baxter L."/>
            <person name="Beisel K.W."/>
            <person name="Bersano T."/>
            <person name="Bono H."/>
            <person name="Chalk A.M."/>
            <person name="Chiu K.P."/>
            <person name="Choudhary V."/>
            <person name="Christoffels A."/>
            <person name="Clutterbuck D.R."/>
            <person name="Crowe M.L."/>
            <person name="Dalla E."/>
            <person name="Dalrymple B.P."/>
            <person name="de Bono B."/>
            <person name="Della Gatta G."/>
            <person name="di Bernardo D."/>
            <person name="Down T."/>
            <person name="Engstrom P."/>
            <person name="Fagiolini M."/>
            <person name="Faulkner G."/>
            <person name="Fletcher C.F."/>
            <person name="Fukushima T."/>
            <person name="Furuno M."/>
            <person name="Futaki S."/>
            <person name="Gariboldi M."/>
            <person name="Georgii-Hemming P."/>
            <person name="Gingeras T.R."/>
            <person name="Gojobori T."/>
            <person name="Green R.E."/>
            <person name="Gustincich S."/>
            <person name="Harbers M."/>
            <person name="Hayashi Y."/>
            <person name="Hensch T.K."/>
            <person name="Hirokawa N."/>
            <person name="Hill D."/>
            <person name="Huminiecki L."/>
            <person name="Iacono M."/>
            <person name="Ikeo K."/>
            <person name="Iwama A."/>
            <person name="Ishikawa T."/>
            <person name="Jakt M."/>
            <person name="Kanapin A."/>
            <person name="Katoh M."/>
            <person name="Kawasawa Y."/>
            <person name="Kelso J."/>
            <person name="Kitamura H."/>
            <person name="Kitano H."/>
            <person name="Kollias G."/>
            <person name="Krishnan S.P."/>
            <person name="Kruger A."/>
            <person name="Kummerfeld S.K."/>
            <person name="Kurochkin I.V."/>
            <person name="Lareau L.F."/>
            <person name="Lazarevic D."/>
            <person name="Lipovich L."/>
            <person name="Liu J."/>
            <person name="Liuni S."/>
            <person name="McWilliam S."/>
            <person name="Madan Babu M."/>
            <person name="Madera M."/>
            <person name="Marchionni L."/>
            <person name="Matsuda H."/>
            <person name="Matsuzawa S."/>
            <person name="Miki H."/>
            <person name="Mignone F."/>
            <person name="Miyake S."/>
            <person name="Morris K."/>
            <person name="Mottagui-Tabar S."/>
            <person name="Mulder N."/>
            <person name="Nakano N."/>
            <person name="Nakauchi H."/>
            <person name="Ng P."/>
            <person name="Nilsson R."/>
            <person name="Nishiguchi S."/>
            <person name="Nishikawa S."/>
            <person name="Nori F."/>
            <person name="Ohara O."/>
            <person name="Okazaki Y."/>
            <person name="Orlando V."/>
            <person name="Pang K.C."/>
            <person name="Pavan W.J."/>
            <person name="Pavesi G."/>
            <person name="Pesole G."/>
            <person name="Petrovsky N."/>
            <person name="Piazza S."/>
            <person name="Reed J."/>
            <person name="Reid J.F."/>
            <person name="Ring B.Z."/>
            <person name="Ringwald M."/>
            <person name="Rost B."/>
            <person name="Ruan Y."/>
            <person name="Salzberg S.L."/>
            <person name="Sandelin A."/>
            <person name="Schneider C."/>
            <person name="Schoenbach C."/>
            <person name="Sekiguchi K."/>
            <person name="Semple C.A."/>
            <person name="Seno S."/>
            <person name="Sessa L."/>
            <person name="Sheng Y."/>
            <person name="Shibata Y."/>
            <person name="Shimada H."/>
            <person name="Shimada K."/>
            <person name="Silva D."/>
            <person name="Sinclair B."/>
            <person name="Sperling S."/>
            <person name="Stupka E."/>
            <person name="Sugiura K."/>
            <person name="Sultana R."/>
            <person name="Takenaka Y."/>
            <person name="Taki K."/>
            <person name="Tammoja K."/>
            <person name="Tan S.L."/>
            <person name="Tang S."/>
            <person name="Taylor M.S."/>
            <person name="Tegner J."/>
            <person name="Teichmann S.A."/>
            <person name="Ueda H.R."/>
            <person name="van Nimwegen E."/>
            <person name="Verardo R."/>
            <person name="Wei C.L."/>
            <person name="Yagi K."/>
            <person name="Yamanishi H."/>
            <person name="Zabarovsky E."/>
            <person name="Zhu S."/>
            <person name="Zimmer A."/>
            <person name="Hide W."/>
            <person name="Bult C."/>
            <person name="Grimmond S.M."/>
            <person name="Teasdale R.D."/>
            <person name="Liu E.T."/>
            <person name="Brusic V."/>
            <person name="Quackenbush J."/>
            <person name="Wahlestedt C."/>
            <person name="Mattick J.S."/>
            <person name="Hume D.A."/>
            <person name="Kai C."/>
            <person name="Sasaki D."/>
            <person name="Tomaru Y."/>
            <person name="Fukuda S."/>
            <person name="Kanamori-Katayama M."/>
            <person name="Suzuki M."/>
            <person name="Aoki J."/>
            <person name="Arakawa T."/>
            <person name="Iida J."/>
            <person name="Imamura K."/>
            <person name="Itoh M."/>
            <person name="Kato T."/>
            <person name="Kawaji H."/>
            <person name="Kawagashira N."/>
            <person name="Kawashima T."/>
            <person name="Kojima M."/>
            <person name="Kondo S."/>
            <person name="Konno H."/>
            <person name="Nakano K."/>
            <person name="Ninomiya N."/>
            <person name="Nishio T."/>
            <person name="Okada M."/>
            <person name="Plessy C."/>
            <person name="Shibata K."/>
            <person name="Shiraki T."/>
            <person name="Suzuki S."/>
            <person name="Tagami M."/>
            <person name="Waki K."/>
            <person name="Watahiki A."/>
            <person name="Okamura-Oho Y."/>
            <person name="Suzuki H."/>
            <person name="Kawai J."/>
            <person name="Hayashizaki Y."/>
        </authorList>
    </citation>
    <scope>NUCLEOTIDE SEQUENCE [LARGE SCALE MRNA]</scope>
    <source>
        <strain>C57BL/6J</strain>
        <tissue>Hippocampus</tissue>
    </source>
</reference>
<reference key="2">
    <citation type="journal article" date="2004" name="Genome Res.">
        <title>The status, quality, and expansion of the NIH full-length cDNA project: the Mammalian Gene Collection (MGC).</title>
        <authorList>
            <consortium name="The MGC Project Team"/>
        </authorList>
    </citation>
    <scope>NUCLEOTIDE SEQUENCE [LARGE SCALE MRNA]</scope>
    <source>
        <strain>C57BL/6J</strain>
        <tissue>Brain</tissue>
        <tissue>Olfactory epithelium</tissue>
    </source>
</reference>
<reference key="3">
    <citation type="submission" date="2007-03" db="UniProtKB">
        <authorList>
            <person name="Lubec G."/>
            <person name="Klug S."/>
            <person name="Kang S.U."/>
        </authorList>
    </citation>
    <scope>PROTEIN SEQUENCE OF 3-19; 47-77; 104-121; 163-174; 242-276; 283-297; 310-318; 321-359; 363-379 AND 381-390</scope>
    <scope>IDENTIFICATION BY MASS SPECTROMETRY</scope>
    <source>
        <strain>C57BL/6J</strain>
        <tissue>Brain</tissue>
        <tissue>Hippocampus</tissue>
    </source>
</reference>
<reference key="4">
    <citation type="journal article" date="1985" name="J. Cell Biol.">
        <title>Five mouse tubulin isotypes and their regulated expression during development.</title>
        <authorList>
            <person name="Lewis S.A."/>
            <person name="Lee M.G.-S."/>
            <person name="Cowan N.J."/>
        </authorList>
    </citation>
    <scope>NUCLEOTIDE SEQUENCE [MRNA] OF 66-444</scope>
</reference>
<reference key="5">
    <citation type="journal article" date="2005" name="Science">
        <title>Tubulin polyglutamylase enzymes are members of the TTL domain protein family.</title>
        <authorList>
            <person name="Janke C."/>
            <person name="Rogowski K."/>
            <person name="Wloga D."/>
            <person name="Regnard C."/>
            <person name="Kajava A.V."/>
            <person name="Strub J.-M."/>
            <person name="Temurak N."/>
            <person name="van Dijk J."/>
            <person name="Boucher D."/>
            <person name="van Dorsselaer A."/>
            <person name="Suryavanshi S."/>
            <person name="Gaertig J."/>
            <person name="Edde B."/>
        </authorList>
    </citation>
    <scope>GLUTAMYLATION</scope>
</reference>
<reference key="6">
    <citation type="journal article" date="2009" name="Cell">
        <title>Evolutionary divergence of enzymatic mechanisms for posttranslational polyglycylation.</title>
        <authorList>
            <person name="Rogowski K."/>
            <person name="Juge F."/>
            <person name="van Dijk J."/>
            <person name="Wloga D."/>
            <person name="Strub J.-M."/>
            <person name="Levilliers N."/>
            <person name="Thomas D."/>
            <person name="Bre M.-H."/>
            <person name="Van Dorsselaer A."/>
            <person name="Gaertig J."/>
            <person name="Janke C."/>
        </authorList>
    </citation>
    <scope>GLYCYLATION</scope>
</reference>
<reference key="7">
    <citation type="journal article" date="2010" name="Cell">
        <title>A tissue-specific atlas of mouse protein phosphorylation and expression.</title>
        <authorList>
            <person name="Huttlin E.L."/>
            <person name="Jedrychowski M.P."/>
            <person name="Elias J.E."/>
            <person name="Goswami T."/>
            <person name="Rad R."/>
            <person name="Beausoleil S.A."/>
            <person name="Villen J."/>
            <person name="Haas W."/>
            <person name="Sowa M.E."/>
            <person name="Gygi S.P."/>
        </authorList>
    </citation>
    <scope>IDENTIFICATION BY MASS SPECTROMETRY [LARGE SCALE ANALYSIS]</scope>
    <source>
        <tissue>Brain</tissue>
        <tissue>Brown adipose tissue</tissue>
        <tissue>Heart</tissue>
        <tissue>Lung</tissue>
        <tissue>Testis</tissue>
    </source>
</reference>
<reference key="8">
    <citation type="journal article" date="2013" name="J. Cell Biol.">
        <title>Tubulin glycylases and glutamylases have distinct functions in stabilization and motility of ependymal cilia.</title>
        <authorList>
            <person name="Bosch Grau M."/>
            <person name="Gonzalez Curto G."/>
            <person name="Rocha C."/>
            <person name="Magiera M.M."/>
            <person name="Marques Sousa P."/>
            <person name="Giordano T."/>
            <person name="Spassky N."/>
            <person name="Janke C."/>
        </authorList>
    </citation>
    <scope>GLYCYLATION</scope>
    <scope>GLUTAMYLATION</scope>
</reference>
<reference key="9">
    <citation type="journal article" date="2021" name="Science">
        <title>Tubulin glycylation controls axonemal dynein activity, flagellar beat, and male fertility.</title>
        <authorList>
            <person name="Gadadhar S."/>
            <person name="Alvarez Viar G."/>
            <person name="Hansen J.N."/>
            <person name="Gong A."/>
            <person name="Kostarev A."/>
            <person name="Ialy-Radio C."/>
            <person name="Leboucher S."/>
            <person name="Whitfield M."/>
            <person name="Ziyyat A."/>
            <person name="Toure A."/>
            <person name="Alvarez L."/>
            <person name="Pigino G."/>
            <person name="Janke C."/>
        </authorList>
    </citation>
    <scope>GLYCYLATION</scope>
</reference>
<comment type="function">
    <text>Tubulin is the major constituent of microtubules, a cylinder consisting of laterally associated linear protofilaments composed of alpha- and beta-tubulin heterodimers. Microtubules grow by the addition of GTP-tubulin dimers to the microtubule end, where a stabilizing cap forms. Below the cap, tubulin dimers are in GDP-bound state, owing to GTPase activity of alpha-tubulin.</text>
</comment>
<comment type="cofactor">
    <cofactor evidence="3">
        <name>Mg(2+)</name>
        <dbReference type="ChEBI" id="CHEBI:18420"/>
    </cofactor>
</comment>
<comment type="subunit">
    <text>Dimer of alpha and beta chains. A typical microtubule is a hollow water-filled tube with an outer diameter of 25 nm and an inner diameter of 15 nM. Alpha-beta heterodimers associate head-to-tail to form protofilaments running lengthwise along the microtubule wall with the beta-tubulin subunit facing the microtubule plus end conferring a structural polarity. Microtubules usually have 13 protofilaments but different protofilament numbers can be found in some organisms and specialized cells.</text>
</comment>
<comment type="subcellular location">
    <subcellularLocation>
        <location>Cytoplasm</location>
        <location>Cytoskeleton</location>
    </subcellularLocation>
</comment>
<comment type="domain">
    <text>The highly acidic C-terminal region may bind cations such as calcium.</text>
</comment>
<comment type="domain">
    <text evidence="2">The MREI motif is common among all beta-tubulin isoforms and may be critical for tubulin autoregulation.</text>
</comment>
<comment type="PTM">
    <text evidence="8 9 10">Some glutamate residues at the C-terminus are polyglycylated, resulting in polyglycine chains on the gamma-carboxyl group. Glycylation is mainly limited to tubulin incorporated into axonemes (cilia and flagella) whereas glutamylation is prevalent in neuronal cells, centrioles, axonemes, and the mitotic spindle. Both modifications can coexist on the same protein on adjacent residues, and lowering polyglycylation levels increases polyglutamylation, and reciprocally. Cilia and flagella glycylation is required for their stability and maintenance. Flagella glycylation controls sperm motility (PubMed:33414192).</text>
</comment>
<comment type="PTM">
    <text evidence="6 7 9">Some glutamate residues at the C-terminus are polyglutamylated, resulting in polyglutamate chains on the gamma-carboxyl group (PubMed:15890843). Polyglutamylation plays a key role in microtubule severing by spastin (SPAST). SPAST preferentially recognizes and acts on microtubules decorated with short polyglutamate tails: severing activity by SPAST increases as the number of glutamates per tubulin rises from one to eight, but decreases beyond this glutamylation threshold (By similarity). Glutamylation is also involved in cilia motility (PubMed:23897886).</text>
</comment>
<comment type="PTM">
    <text evidence="1">Phosphorylated on Ser-172 by CDK1 during the cell cycle, from metaphase to telophase, but not in interphase. This phosphorylation inhibits tubulin incorporation into microtubules.</text>
</comment>
<comment type="similarity">
    <text evidence="11">Belongs to the tubulin family.</text>
</comment>
<proteinExistence type="evidence at protein level"/>
<feature type="chain" id="PRO_0000048254" description="Tubulin beta-4A chain">
    <location>
        <begin position="1"/>
        <end position="444"/>
    </location>
</feature>
<feature type="short sequence motif" description="MREI motif" evidence="2">
    <location>
        <begin position="1"/>
        <end position="4"/>
    </location>
</feature>
<feature type="binding site" evidence="4">
    <location>
        <position position="11"/>
    </location>
    <ligand>
        <name>GTP</name>
        <dbReference type="ChEBI" id="CHEBI:37565"/>
    </ligand>
</feature>
<feature type="binding site" evidence="3">
    <location>
        <position position="69"/>
    </location>
    <ligand>
        <name>GTP</name>
        <dbReference type="ChEBI" id="CHEBI:37565"/>
    </ligand>
</feature>
<feature type="binding site" evidence="3">
    <location>
        <position position="69"/>
    </location>
    <ligand>
        <name>Mg(2+)</name>
        <dbReference type="ChEBI" id="CHEBI:18420"/>
    </ligand>
</feature>
<feature type="binding site" evidence="4">
    <location>
        <position position="138"/>
    </location>
    <ligand>
        <name>GTP</name>
        <dbReference type="ChEBI" id="CHEBI:37565"/>
    </ligand>
</feature>
<feature type="binding site" evidence="4">
    <location>
        <position position="142"/>
    </location>
    <ligand>
        <name>GTP</name>
        <dbReference type="ChEBI" id="CHEBI:37565"/>
    </ligand>
</feature>
<feature type="binding site" evidence="4">
    <location>
        <position position="143"/>
    </location>
    <ligand>
        <name>GTP</name>
        <dbReference type="ChEBI" id="CHEBI:37565"/>
    </ligand>
</feature>
<feature type="binding site" evidence="4">
    <location>
        <position position="144"/>
    </location>
    <ligand>
        <name>GTP</name>
        <dbReference type="ChEBI" id="CHEBI:37565"/>
    </ligand>
</feature>
<feature type="binding site" evidence="4">
    <location>
        <position position="204"/>
    </location>
    <ligand>
        <name>GTP</name>
        <dbReference type="ChEBI" id="CHEBI:37565"/>
    </ligand>
</feature>
<feature type="binding site" evidence="4">
    <location>
        <position position="226"/>
    </location>
    <ligand>
        <name>GTP</name>
        <dbReference type="ChEBI" id="CHEBI:37565"/>
    </ligand>
</feature>
<feature type="modified residue" description="Phosphoserine; by CDK1" evidence="1">
    <location>
        <position position="172"/>
    </location>
</feature>
<feature type="modified residue" description="5-glutamyl polyglutamate" evidence="5">
    <location>
        <position position="436"/>
    </location>
</feature>
<feature type="sequence conflict" description="In Ref. 4; AAA40509." evidence="11" ref="4">
    <original>M</original>
    <variation>I</variation>
    <location>
        <position position="73"/>
    </location>
</feature>
<feature type="sequence conflict" description="In Ref. 4; AAA40509." evidence="11" ref="4">
    <original>E</original>
    <variation>Q</variation>
    <location>
        <position position="111"/>
    </location>
</feature>
<feature type="sequence conflict" description="In Ref. 4; AAA40509." evidence="11" ref="4">
    <original>F</original>
    <variation>L</variation>
    <location>
        <position position="270"/>
    </location>
</feature>
<feature type="sequence conflict" description="In Ref. 4; AAA40509." evidence="11" ref="4">
    <original>M</original>
    <variation>V</variation>
    <location>
        <position position="293"/>
    </location>
</feature>
<feature type="sequence conflict" description="In Ref. 4; AAA40509." evidence="11" ref="4">
    <original>C</original>
    <variation>S</variation>
    <location>
        <position position="303"/>
    </location>
</feature>
<feature type="sequence conflict" description="In Ref. 4; AAA40509." evidence="11" ref="4">
    <original>T</original>
    <variation>A</variation>
    <location>
        <position position="351"/>
    </location>
</feature>
<feature type="sequence conflict" description="In Ref. 4; AAA40509." evidence="11" ref="4">
    <original>G</original>
    <variation>A</variation>
    <location>
        <position position="400"/>
    </location>
</feature>
<feature type="sequence conflict" description="In Ref. 1; BAB28967." evidence="11" ref="1">
    <original>D</original>
    <variation>G</variation>
    <location>
        <position position="427"/>
    </location>
</feature>
<protein>
    <recommendedName>
        <fullName>Tubulin beta-4A chain</fullName>
    </recommendedName>
    <alternativeName>
        <fullName>Tubulin beta-4 chain</fullName>
    </alternativeName>
</protein>
<organism>
    <name type="scientific">Mus musculus</name>
    <name type="common">Mouse</name>
    <dbReference type="NCBI Taxonomy" id="10090"/>
    <lineage>
        <taxon>Eukaryota</taxon>
        <taxon>Metazoa</taxon>
        <taxon>Chordata</taxon>
        <taxon>Craniata</taxon>
        <taxon>Vertebrata</taxon>
        <taxon>Euteleostomi</taxon>
        <taxon>Mammalia</taxon>
        <taxon>Eutheria</taxon>
        <taxon>Euarchontoglires</taxon>
        <taxon>Glires</taxon>
        <taxon>Rodentia</taxon>
        <taxon>Myomorpha</taxon>
        <taxon>Muroidea</taxon>
        <taxon>Muridae</taxon>
        <taxon>Murinae</taxon>
        <taxon>Mus</taxon>
        <taxon>Mus</taxon>
    </lineage>
</organism>
<dbReference type="EMBL" id="AK013717">
    <property type="protein sequence ID" value="BAB28967.1"/>
    <property type="molecule type" value="mRNA"/>
</dbReference>
<dbReference type="EMBL" id="BC049112">
    <property type="protein sequence ID" value="AAH49112.1"/>
    <property type="molecule type" value="mRNA"/>
</dbReference>
<dbReference type="EMBL" id="BC054831">
    <property type="protein sequence ID" value="AAH54831.1"/>
    <property type="molecule type" value="mRNA"/>
</dbReference>
<dbReference type="EMBL" id="M28730">
    <property type="protein sequence ID" value="AAA40509.1"/>
    <property type="molecule type" value="mRNA"/>
</dbReference>
<dbReference type="CCDS" id="CCDS28925.1"/>
<dbReference type="RefSeq" id="NP_033477.2">
    <property type="nucleotide sequence ID" value="NM_009451.3"/>
</dbReference>
<dbReference type="SMR" id="Q9D6F9"/>
<dbReference type="BioGRID" id="204380">
    <property type="interactions" value="34"/>
</dbReference>
<dbReference type="FunCoup" id="Q9D6F9">
    <property type="interactions" value="867"/>
</dbReference>
<dbReference type="IntAct" id="Q9D6F9">
    <property type="interactions" value="13"/>
</dbReference>
<dbReference type="MINT" id="Q9D6F9"/>
<dbReference type="STRING" id="10090.ENSMUSP00000071135"/>
<dbReference type="CarbonylDB" id="Q9D6F9"/>
<dbReference type="GlyGen" id="Q9D6F9">
    <property type="glycosylation" value="4 sites, 2 N-linked glycans (2 sites), 1 O-linked glycan (2 sites)"/>
</dbReference>
<dbReference type="iPTMnet" id="Q9D6F9"/>
<dbReference type="MetOSite" id="Q9D6F9"/>
<dbReference type="PhosphoSitePlus" id="Q9D6F9"/>
<dbReference type="SwissPalm" id="Q9D6F9"/>
<dbReference type="REPRODUCTION-2DPAGE" id="IPI00109073"/>
<dbReference type="REPRODUCTION-2DPAGE" id="Q9D6F9"/>
<dbReference type="jPOST" id="Q9D6F9"/>
<dbReference type="PaxDb" id="10090-ENSMUSP00000071135"/>
<dbReference type="PeptideAtlas" id="Q9D6F9"/>
<dbReference type="ProteomicsDB" id="262946"/>
<dbReference type="Pumba" id="Q9D6F9"/>
<dbReference type="TopDownProteomics" id="Q9D6F9"/>
<dbReference type="Antibodypedia" id="4387">
    <property type="antibodies" value="211 antibodies from 21 providers"/>
</dbReference>
<dbReference type="DNASU" id="22153"/>
<dbReference type="Ensembl" id="ENSMUST00000071135.6">
    <property type="protein sequence ID" value="ENSMUSP00000071135.6"/>
    <property type="gene ID" value="ENSMUSG00000062591.6"/>
</dbReference>
<dbReference type="GeneID" id="22153"/>
<dbReference type="KEGG" id="mmu:22153"/>
<dbReference type="UCSC" id="uc008dea.1">
    <property type="organism name" value="mouse"/>
</dbReference>
<dbReference type="AGR" id="MGI:107848"/>
<dbReference type="CTD" id="10382"/>
<dbReference type="MGI" id="MGI:107848">
    <property type="gene designation" value="Tubb4a"/>
</dbReference>
<dbReference type="VEuPathDB" id="HostDB:ENSMUSG00000062591"/>
<dbReference type="eggNOG" id="KOG1375">
    <property type="taxonomic scope" value="Eukaryota"/>
</dbReference>
<dbReference type="GeneTree" id="ENSGT00940000161972"/>
<dbReference type="HOGENOM" id="CLU_015718_1_1_1"/>
<dbReference type="InParanoid" id="Q9D6F9"/>
<dbReference type="OMA" id="CFPAGGN"/>
<dbReference type="OrthoDB" id="9987387at2759"/>
<dbReference type="PhylomeDB" id="Q9D6F9"/>
<dbReference type="TreeFam" id="TF300298"/>
<dbReference type="Reactome" id="R-MMU-190840">
    <property type="pathway name" value="Microtubule-dependent trafficking of connexons from Golgi to the plasma membrane"/>
</dbReference>
<dbReference type="Reactome" id="R-MMU-2132295">
    <property type="pathway name" value="MHC class II antigen presentation"/>
</dbReference>
<dbReference type="Reactome" id="R-MMU-2467813">
    <property type="pathway name" value="Separation of Sister Chromatids"/>
</dbReference>
<dbReference type="Reactome" id="R-MMU-2500257">
    <property type="pathway name" value="Resolution of Sister Chromatid Cohesion"/>
</dbReference>
<dbReference type="Reactome" id="R-MMU-2565942">
    <property type="pathway name" value="Regulation of PLK1 Activity at G2/M Transition"/>
</dbReference>
<dbReference type="Reactome" id="R-MMU-3371497">
    <property type="pathway name" value="HSP90 chaperone cycle for steroid hormone receptors (SHR) in the presence of ligand"/>
</dbReference>
<dbReference type="Reactome" id="R-MMU-380259">
    <property type="pathway name" value="Loss of Nlp from mitotic centrosomes"/>
</dbReference>
<dbReference type="Reactome" id="R-MMU-380270">
    <property type="pathway name" value="Recruitment of mitotic centrosome proteins and complexes"/>
</dbReference>
<dbReference type="Reactome" id="R-MMU-380284">
    <property type="pathway name" value="Loss of proteins required for interphase microtubule organization from the centrosome"/>
</dbReference>
<dbReference type="Reactome" id="R-MMU-380320">
    <property type="pathway name" value="Recruitment of NuMA to mitotic centrosomes"/>
</dbReference>
<dbReference type="Reactome" id="R-MMU-437239">
    <property type="pathway name" value="Recycling pathway of L1"/>
</dbReference>
<dbReference type="Reactome" id="R-MMU-5610787">
    <property type="pathway name" value="Hedgehog 'off' state"/>
</dbReference>
<dbReference type="Reactome" id="R-MMU-5617833">
    <property type="pathway name" value="Cilium Assembly"/>
</dbReference>
<dbReference type="Reactome" id="R-MMU-5620912">
    <property type="pathway name" value="Anchoring of the basal body to the plasma membrane"/>
</dbReference>
<dbReference type="Reactome" id="R-MMU-5620924">
    <property type="pathway name" value="Intraflagellar transport"/>
</dbReference>
<dbReference type="Reactome" id="R-MMU-5626467">
    <property type="pathway name" value="RHO GTPases activate IQGAPs"/>
</dbReference>
<dbReference type="Reactome" id="R-MMU-5663220">
    <property type="pathway name" value="RHO GTPases Activate Formins"/>
</dbReference>
<dbReference type="Reactome" id="R-MMU-6807878">
    <property type="pathway name" value="COPI-mediated anterograde transport"/>
</dbReference>
<dbReference type="Reactome" id="R-MMU-6811434">
    <property type="pathway name" value="COPI-dependent Golgi-to-ER retrograde traffic"/>
</dbReference>
<dbReference type="Reactome" id="R-MMU-6811436">
    <property type="pathway name" value="COPI-independent Golgi-to-ER retrograde traffic"/>
</dbReference>
<dbReference type="Reactome" id="R-MMU-68877">
    <property type="pathway name" value="Mitotic Prometaphase"/>
</dbReference>
<dbReference type="Reactome" id="R-MMU-8852276">
    <property type="pathway name" value="The role of GTSE1 in G2/M progression after G2 checkpoint"/>
</dbReference>
<dbReference type="Reactome" id="R-MMU-8854518">
    <property type="pathway name" value="AURKA Activation by TPX2"/>
</dbReference>
<dbReference type="Reactome" id="R-MMU-8955332">
    <property type="pathway name" value="Carboxyterminal post-translational modifications of tubulin"/>
</dbReference>
<dbReference type="Reactome" id="R-MMU-9646399">
    <property type="pathway name" value="Aggrephagy"/>
</dbReference>
<dbReference type="Reactome" id="R-MMU-9648025">
    <property type="pathway name" value="EML4 and NUDC in mitotic spindle formation"/>
</dbReference>
<dbReference type="Reactome" id="R-MMU-9668328">
    <property type="pathway name" value="Sealing of the nuclear envelope (NE) by ESCRT-III"/>
</dbReference>
<dbReference type="Reactome" id="R-MMU-983189">
    <property type="pathway name" value="Kinesins"/>
</dbReference>
<dbReference type="Reactome" id="R-MMU-9833482">
    <property type="pathway name" value="PKR-mediated signaling"/>
</dbReference>
<dbReference type="BioGRID-ORCS" id="22153">
    <property type="hits" value="4 hits in 76 CRISPR screens"/>
</dbReference>
<dbReference type="CD-CODE" id="CE726F99">
    <property type="entry name" value="Postsynaptic density"/>
</dbReference>
<dbReference type="ChiTaRS" id="Tubb4a">
    <property type="organism name" value="mouse"/>
</dbReference>
<dbReference type="PRO" id="PR:Q9D6F9"/>
<dbReference type="Proteomes" id="UP000000589">
    <property type="component" value="Chromosome 17"/>
</dbReference>
<dbReference type="RNAct" id="Q9D6F9">
    <property type="molecule type" value="protein"/>
</dbReference>
<dbReference type="Bgee" id="ENSMUSG00000062591">
    <property type="expression patterns" value="Expressed in primary visual cortex and 170 other cell types or tissues"/>
</dbReference>
<dbReference type="GO" id="GO:0005930">
    <property type="term" value="C:axoneme"/>
    <property type="evidence" value="ECO:0007669"/>
    <property type="project" value="Ensembl"/>
</dbReference>
<dbReference type="GO" id="GO:0042995">
    <property type="term" value="C:cell projection"/>
    <property type="evidence" value="ECO:0000314"/>
    <property type="project" value="MGI"/>
</dbReference>
<dbReference type="GO" id="GO:0005929">
    <property type="term" value="C:cilium"/>
    <property type="evidence" value="ECO:0000314"/>
    <property type="project" value="MGI"/>
</dbReference>
<dbReference type="GO" id="GO:0005737">
    <property type="term" value="C:cytoplasm"/>
    <property type="evidence" value="ECO:0000314"/>
    <property type="project" value="MGI"/>
</dbReference>
<dbReference type="GO" id="GO:0045171">
    <property type="term" value="C:intercellular bridge"/>
    <property type="evidence" value="ECO:0007669"/>
    <property type="project" value="Ensembl"/>
</dbReference>
<dbReference type="GO" id="GO:0033269">
    <property type="term" value="C:internode region of axon"/>
    <property type="evidence" value="ECO:0000314"/>
    <property type="project" value="MGI"/>
</dbReference>
<dbReference type="GO" id="GO:0005874">
    <property type="term" value="C:microtubule"/>
    <property type="evidence" value="ECO:0007669"/>
    <property type="project" value="UniProtKB-KW"/>
</dbReference>
<dbReference type="GO" id="GO:0072686">
    <property type="term" value="C:mitotic spindle"/>
    <property type="evidence" value="ECO:0007669"/>
    <property type="project" value="Ensembl"/>
</dbReference>
<dbReference type="GO" id="GO:0043209">
    <property type="term" value="C:myelin sheath"/>
    <property type="evidence" value="ECO:0000314"/>
    <property type="project" value="MGI"/>
</dbReference>
<dbReference type="GO" id="GO:0043025">
    <property type="term" value="C:neuronal cell body"/>
    <property type="evidence" value="ECO:0000314"/>
    <property type="project" value="MGI"/>
</dbReference>
<dbReference type="GO" id="GO:0005509">
    <property type="term" value="F:calcium ion binding"/>
    <property type="evidence" value="ECO:0007669"/>
    <property type="project" value="Ensembl"/>
</dbReference>
<dbReference type="GO" id="GO:0005525">
    <property type="term" value="F:GTP binding"/>
    <property type="evidence" value="ECO:0007669"/>
    <property type="project" value="UniProtKB-KW"/>
</dbReference>
<dbReference type="GO" id="GO:0003924">
    <property type="term" value="F:GTPase activity"/>
    <property type="evidence" value="ECO:0007669"/>
    <property type="project" value="InterPro"/>
</dbReference>
<dbReference type="GO" id="GO:0005200">
    <property type="term" value="F:structural constituent of cytoskeleton"/>
    <property type="evidence" value="ECO:0007669"/>
    <property type="project" value="InterPro"/>
</dbReference>
<dbReference type="GO" id="GO:0030030">
    <property type="term" value="P:cell projection organization"/>
    <property type="evidence" value="ECO:0007669"/>
    <property type="project" value="UniProtKB-KW"/>
</dbReference>
<dbReference type="GO" id="GO:0007017">
    <property type="term" value="P:microtubule-based process"/>
    <property type="evidence" value="ECO:0007669"/>
    <property type="project" value="InterPro"/>
</dbReference>
<dbReference type="GO" id="GO:0031115">
    <property type="term" value="P:negative regulation of microtubule polymerization"/>
    <property type="evidence" value="ECO:0007669"/>
    <property type="project" value="Ensembl"/>
</dbReference>
<dbReference type="CDD" id="cd02187">
    <property type="entry name" value="beta_tubulin"/>
    <property type="match status" value="1"/>
</dbReference>
<dbReference type="FunFam" id="1.10.287.600:FF:000002">
    <property type="entry name" value="Tubulin beta chain"/>
    <property type="match status" value="1"/>
</dbReference>
<dbReference type="FunFam" id="3.30.1330.20:FF:000002">
    <property type="entry name" value="Tubulin beta chain"/>
    <property type="match status" value="1"/>
</dbReference>
<dbReference type="FunFam" id="3.40.50.1440:FF:000003">
    <property type="entry name" value="Tubulin beta chain"/>
    <property type="match status" value="1"/>
</dbReference>
<dbReference type="Gene3D" id="1.10.287.600">
    <property type="entry name" value="Helix hairpin bin"/>
    <property type="match status" value="1"/>
</dbReference>
<dbReference type="Gene3D" id="3.30.1330.20">
    <property type="entry name" value="Tubulin/FtsZ, C-terminal domain"/>
    <property type="match status" value="1"/>
</dbReference>
<dbReference type="Gene3D" id="3.40.50.1440">
    <property type="entry name" value="Tubulin/FtsZ, GTPase domain"/>
    <property type="match status" value="1"/>
</dbReference>
<dbReference type="InterPro" id="IPR013838">
    <property type="entry name" value="Beta-tubulin_BS"/>
</dbReference>
<dbReference type="InterPro" id="IPR002453">
    <property type="entry name" value="Beta_tubulin"/>
</dbReference>
<dbReference type="InterPro" id="IPR008280">
    <property type="entry name" value="Tub_FtsZ_C"/>
</dbReference>
<dbReference type="InterPro" id="IPR000217">
    <property type="entry name" value="Tubulin"/>
</dbReference>
<dbReference type="InterPro" id="IPR037103">
    <property type="entry name" value="Tubulin/FtsZ-like_C"/>
</dbReference>
<dbReference type="InterPro" id="IPR018316">
    <property type="entry name" value="Tubulin/FtsZ_2-layer-sand-dom"/>
</dbReference>
<dbReference type="InterPro" id="IPR036525">
    <property type="entry name" value="Tubulin/FtsZ_GTPase_sf"/>
</dbReference>
<dbReference type="InterPro" id="IPR023123">
    <property type="entry name" value="Tubulin_C"/>
</dbReference>
<dbReference type="InterPro" id="IPR017975">
    <property type="entry name" value="Tubulin_CS"/>
</dbReference>
<dbReference type="InterPro" id="IPR003008">
    <property type="entry name" value="Tubulin_FtsZ_GTPase"/>
</dbReference>
<dbReference type="PANTHER" id="PTHR11588">
    <property type="entry name" value="TUBULIN"/>
    <property type="match status" value="1"/>
</dbReference>
<dbReference type="Pfam" id="PF00091">
    <property type="entry name" value="Tubulin"/>
    <property type="match status" value="1"/>
</dbReference>
<dbReference type="Pfam" id="PF03953">
    <property type="entry name" value="Tubulin_C"/>
    <property type="match status" value="1"/>
</dbReference>
<dbReference type="PRINTS" id="PR01163">
    <property type="entry name" value="BETATUBULIN"/>
</dbReference>
<dbReference type="PRINTS" id="PR01161">
    <property type="entry name" value="TUBULIN"/>
</dbReference>
<dbReference type="SMART" id="SM00864">
    <property type="entry name" value="Tubulin"/>
    <property type="match status" value="1"/>
</dbReference>
<dbReference type="SMART" id="SM00865">
    <property type="entry name" value="Tubulin_C"/>
    <property type="match status" value="1"/>
</dbReference>
<dbReference type="SUPFAM" id="SSF55307">
    <property type="entry name" value="Tubulin C-terminal domain-like"/>
    <property type="match status" value="1"/>
</dbReference>
<dbReference type="SUPFAM" id="SSF52490">
    <property type="entry name" value="Tubulin nucleotide-binding domain-like"/>
    <property type="match status" value="1"/>
</dbReference>
<dbReference type="PROSITE" id="PS00227">
    <property type="entry name" value="TUBULIN"/>
    <property type="match status" value="1"/>
</dbReference>
<dbReference type="PROSITE" id="PS00228">
    <property type="entry name" value="TUBULIN_B_AUTOREG"/>
    <property type="match status" value="1"/>
</dbReference>
<evidence type="ECO:0000250" key="1">
    <source>
        <dbReference type="UniProtKB" id="P04350"/>
    </source>
</evidence>
<evidence type="ECO:0000250" key="2">
    <source>
        <dbReference type="UniProtKB" id="P07437"/>
    </source>
</evidence>
<evidence type="ECO:0000250" key="3">
    <source>
        <dbReference type="UniProtKB" id="P68363"/>
    </source>
</evidence>
<evidence type="ECO:0000250" key="4">
    <source>
        <dbReference type="UniProtKB" id="Q13509"/>
    </source>
</evidence>
<evidence type="ECO:0000250" key="5">
    <source>
        <dbReference type="UniProtKB" id="Q2T9S0"/>
    </source>
</evidence>
<evidence type="ECO:0000250" key="6">
    <source>
        <dbReference type="UniProtKB" id="Q71U36"/>
    </source>
</evidence>
<evidence type="ECO:0000269" key="7">
    <source>
    </source>
</evidence>
<evidence type="ECO:0000269" key="8">
    <source>
    </source>
</evidence>
<evidence type="ECO:0000269" key="9">
    <source>
    </source>
</evidence>
<evidence type="ECO:0000269" key="10">
    <source>
    </source>
</evidence>
<evidence type="ECO:0000305" key="11"/>
<name>TBB4A_MOUSE</name>